<name>RBL_RUTFR</name>
<reference key="1">
    <citation type="journal article" date="1992" name="Science">
        <title>Carnivorous plants: phylogeny and structural evolution.</title>
        <authorList>
            <person name="Albert V.A."/>
            <person name="Williams S.E."/>
            <person name="Chase M.W."/>
        </authorList>
    </citation>
    <scope>NUCLEOTIDE SEQUENCE [GENOMIC DNA]</scope>
</reference>
<proteinExistence type="inferred from homology"/>
<geneLocation type="chloroplast"/>
<sequence length="466" mass="51636">VGFKAGVKEYKLTYYTPEYETKDTDILAAFRVTPQPGVPPEEAGAAVAAESSTGTWTTVWTDGLTSLDRYKGRCYNIEPVLGETDQYICYVAYPLDLFEEGSVTNMFTSIVGNVFGFKALRALRLEDLRIPPAYIKTFQGPPHGIQSERDKLNKYGRPLLGCTIKPKLGLSAKNYGRACYECLRGGLDFTKDDENVNSQPFMRWRDRFLFCAEAIYKSQAETGEIKGHYLNATAGTCEEMIKRAVFARELGVPIVMHDYLTGGFTANTSLAHYCRDNGLLLHIHRAMHAVIDRQKNHGMHFRVLAKALRLSGGDHIHSGTVVGKLEGERDITLGFVDLLRDDFVEQDRSRGIYFTQDWVSLPGVIPVASGGIHVWHMPALTEIFGDDSVLQFGGGTLGHPWGNAPGAVANRVAVEACVQARNEGRDLAAEGNEIIREASKWSPELAAACEVWKAIKFEFRAVDTLD</sequence>
<gene>
    <name evidence="1" type="primary">rbcL</name>
</gene>
<keyword id="KW-0113">Calvin cycle</keyword>
<keyword id="KW-0120">Carbon dioxide fixation</keyword>
<keyword id="KW-0150">Chloroplast</keyword>
<keyword id="KW-1015">Disulfide bond</keyword>
<keyword id="KW-0456">Lyase</keyword>
<keyword id="KW-0460">Magnesium</keyword>
<keyword id="KW-0479">Metal-binding</keyword>
<keyword id="KW-0488">Methylation</keyword>
<keyword id="KW-0503">Monooxygenase</keyword>
<keyword id="KW-0560">Oxidoreductase</keyword>
<keyword id="KW-0601">Photorespiration</keyword>
<keyword id="KW-0602">Photosynthesis</keyword>
<keyword id="KW-0934">Plastid</keyword>
<organism>
    <name type="scientific">Ruttya fruticosa</name>
    <name type="common">African azalea</name>
    <dbReference type="NCBI Taxonomy" id="4195"/>
    <lineage>
        <taxon>Eukaryota</taxon>
        <taxon>Viridiplantae</taxon>
        <taxon>Streptophyta</taxon>
        <taxon>Embryophyta</taxon>
        <taxon>Tracheophyta</taxon>
        <taxon>Spermatophyta</taxon>
        <taxon>Magnoliopsida</taxon>
        <taxon>eudicotyledons</taxon>
        <taxon>Gunneridae</taxon>
        <taxon>Pentapetalae</taxon>
        <taxon>asterids</taxon>
        <taxon>lamiids</taxon>
        <taxon>Lamiales</taxon>
        <taxon>Acanthaceae</taxon>
        <taxon>Acanthoideae</taxon>
        <taxon>Justicieae</taxon>
        <taxon>Ruttya</taxon>
    </lineage>
</organism>
<comment type="function">
    <text evidence="1">RuBisCO catalyzes two reactions: the carboxylation of D-ribulose 1,5-bisphosphate, the primary event in carbon dioxide fixation, as well as the oxidative fragmentation of the pentose substrate in the photorespiration process. Both reactions occur simultaneously and in competition at the same active site.</text>
</comment>
<comment type="catalytic activity">
    <reaction evidence="1">
        <text>2 (2R)-3-phosphoglycerate + 2 H(+) = D-ribulose 1,5-bisphosphate + CO2 + H2O</text>
        <dbReference type="Rhea" id="RHEA:23124"/>
        <dbReference type="ChEBI" id="CHEBI:15377"/>
        <dbReference type="ChEBI" id="CHEBI:15378"/>
        <dbReference type="ChEBI" id="CHEBI:16526"/>
        <dbReference type="ChEBI" id="CHEBI:57870"/>
        <dbReference type="ChEBI" id="CHEBI:58272"/>
        <dbReference type="EC" id="4.1.1.39"/>
    </reaction>
</comment>
<comment type="catalytic activity">
    <reaction evidence="1">
        <text>D-ribulose 1,5-bisphosphate + O2 = 2-phosphoglycolate + (2R)-3-phosphoglycerate + 2 H(+)</text>
        <dbReference type="Rhea" id="RHEA:36631"/>
        <dbReference type="ChEBI" id="CHEBI:15378"/>
        <dbReference type="ChEBI" id="CHEBI:15379"/>
        <dbReference type="ChEBI" id="CHEBI:57870"/>
        <dbReference type="ChEBI" id="CHEBI:58033"/>
        <dbReference type="ChEBI" id="CHEBI:58272"/>
    </reaction>
</comment>
<comment type="cofactor">
    <cofactor evidence="1">
        <name>Mg(2+)</name>
        <dbReference type="ChEBI" id="CHEBI:18420"/>
    </cofactor>
    <text evidence="1">Binds 1 Mg(2+) ion per subunit.</text>
</comment>
<comment type="subunit">
    <text evidence="1">Heterohexadecamer of 8 large chains and 8 small chains; disulfide-linked. The disulfide link is formed within the large subunit homodimers.</text>
</comment>
<comment type="subcellular location">
    <subcellularLocation>
        <location>Plastid</location>
        <location>Chloroplast</location>
    </subcellularLocation>
</comment>
<comment type="PTM">
    <text evidence="1">The disulfide bond which can form in the large chain dimeric partners within the hexadecamer appears to be associated with oxidative stress and protein turnover.</text>
</comment>
<comment type="miscellaneous">
    <text evidence="1">The basic functional RuBisCO is composed of a large chain homodimer in a 'head-to-tail' conformation. In form I RuBisCO this homodimer is arranged in a barrel-like tetramer with the small subunits forming a tetrameric 'cap' on each end of the 'barrel'.</text>
</comment>
<comment type="similarity">
    <text evidence="1">Belongs to the RuBisCO large chain family. Type I subfamily.</text>
</comment>
<accession>P28449</accession>
<feature type="chain" id="PRO_0000062583" description="Ribulose bisphosphate carboxylase large chain">
    <location>
        <begin position="1" status="less than"/>
        <end position="466"/>
    </location>
</feature>
<feature type="active site" description="Proton acceptor" evidence="1">
    <location>
        <position position="165"/>
    </location>
</feature>
<feature type="active site" description="Proton acceptor" evidence="1">
    <location>
        <position position="284"/>
    </location>
</feature>
<feature type="binding site" description="in homodimeric partner" evidence="1">
    <location>
        <position position="113"/>
    </location>
    <ligand>
        <name>substrate</name>
    </ligand>
</feature>
<feature type="binding site" evidence="1">
    <location>
        <position position="163"/>
    </location>
    <ligand>
        <name>substrate</name>
    </ligand>
</feature>
<feature type="binding site" evidence="1">
    <location>
        <position position="167"/>
    </location>
    <ligand>
        <name>substrate</name>
    </ligand>
</feature>
<feature type="binding site" description="via carbamate group" evidence="1">
    <location>
        <position position="191"/>
    </location>
    <ligand>
        <name>Mg(2+)</name>
        <dbReference type="ChEBI" id="CHEBI:18420"/>
    </ligand>
</feature>
<feature type="binding site" evidence="1">
    <location>
        <position position="193"/>
    </location>
    <ligand>
        <name>Mg(2+)</name>
        <dbReference type="ChEBI" id="CHEBI:18420"/>
    </ligand>
</feature>
<feature type="binding site" evidence="1">
    <location>
        <position position="194"/>
    </location>
    <ligand>
        <name>Mg(2+)</name>
        <dbReference type="ChEBI" id="CHEBI:18420"/>
    </ligand>
</feature>
<feature type="binding site" evidence="1">
    <location>
        <position position="285"/>
    </location>
    <ligand>
        <name>substrate</name>
    </ligand>
</feature>
<feature type="binding site" evidence="1">
    <location>
        <position position="317"/>
    </location>
    <ligand>
        <name>substrate</name>
    </ligand>
</feature>
<feature type="binding site" evidence="1">
    <location>
        <position position="369"/>
    </location>
    <ligand>
        <name>substrate</name>
    </ligand>
</feature>
<feature type="site" description="Transition state stabilizer" evidence="1">
    <location>
        <position position="324"/>
    </location>
</feature>
<feature type="modified residue" description="N6,N6,N6-trimethyllysine" evidence="1">
    <location>
        <position position="4"/>
    </location>
</feature>
<feature type="modified residue" description="N6-carboxylysine" evidence="1">
    <location>
        <position position="191"/>
    </location>
</feature>
<feature type="disulfide bond" description="Interchain; in linked form" evidence="1">
    <location>
        <position position="237"/>
    </location>
</feature>
<feature type="non-terminal residue">
    <location>
        <position position="1"/>
    </location>
</feature>
<protein>
    <recommendedName>
        <fullName evidence="1">Ribulose bisphosphate carboxylase large chain</fullName>
        <shortName evidence="1">RuBisCO large subunit</shortName>
        <ecNumber evidence="1">4.1.1.39</ecNumber>
    </recommendedName>
</protein>
<dbReference type="EC" id="4.1.1.39" evidence="1"/>
<dbReference type="EMBL" id="L02434">
    <property type="protein sequence ID" value="AAA84598.2"/>
    <property type="molecule type" value="Genomic_DNA"/>
</dbReference>
<dbReference type="SMR" id="P28449"/>
<dbReference type="GO" id="GO:0009507">
    <property type="term" value="C:chloroplast"/>
    <property type="evidence" value="ECO:0007669"/>
    <property type="project" value="UniProtKB-SubCell"/>
</dbReference>
<dbReference type="GO" id="GO:0000287">
    <property type="term" value="F:magnesium ion binding"/>
    <property type="evidence" value="ECO:0007669"/>
    <property type="project" value="InterPro"/>
</dbReference>
<dbReference type="GO" id="GO:0004497">
    <property type="term" value="F:monooxygenase activity"/>
    <property type="evidence" value="ECO:0007669"/>
    <property type="project" value="UniProtKB-KW"/>
</dbReference>
<dbReference type="GO" id="GO:0016984">
    <property type="term" value="F:ribulose-bisphosphate carboxylase activity"/>
    <property type="evidence" value="ECO:0007669"/>
    <property type="project" value="UniProtKB-EC"/>
</dbReference>
<dbReference type="GO" id="GO:0009853">
    <property type="term" value="P:photorespiration"/>
    <property type="evidence" value="ECO:0007669"/>
    <property type="project" value="UniProtKB-KW"/>
</dbReference>
<dbReference type="GO" id="GO:0019253">
    <property type="term" value="P:reductive pentose-phosphate cycle"/>
    <property type="evidence" value="ECO:0007669"/>
    <property type="project" value="UniProtKB-KW"/>
</dbReference>
<dbReference type="CDD" id="cd08212">
    <property type="entry name" value="RuBisCO_large_I"/>
    <property type="match status" value="1"/>
</dbReference>
<dbReference type="FunFam" id="3.20.20.110:FF:000001">
    <property type="entry name" value="Ribulose bisphosphate carboxylase large chain"/>
    <property type="match status" value="1"/>
</dbReference>
<dbReference type="FunFam" id="3.30.70.150:FF:000001">
    <property type="entry name" value="Ribulose bisphosphate carboxylase large chain"/>
    <property type="match status" value="1"/>
</dbReference>
<dbReference type="Gene3D" id="3.20.20.110">
    <property type="entry name" value="Ribulose bisphosphate carboxylase, large subunit, C-terminal domain"/>
    <property type="match status" value="1"/>
</dbReference>
<dbReference type="Gene3D" id="3.30.70.150">
    <property type="entry name" value="RuBisCO large subunit, N-terminal domain"/>
    <property type="match status" value="1"/>
</dbReference>
<dbReference type="HAMAP" id="MF_01338">
    <property type="entry name" value="RuBisCO_L_type1"/>
    <property type="match status" value="1"/>
</dbReference>
<dbReference type="InterPro" id="IPR033966">
    <property type="entry name" value="RuBisCO"/>
</dbReference>
<dbReference type="InterPro" id="IPR020878">
    <property type="entry name" value="RuBisCo_large_chain_AS"/>
</dbReference>
<dbReference type="InterPro" id="IPR000685">
    <property type="entry name" value="RuBisCO_lsu_C"/>
</dbReference>
<dbReference type="InterPro" id="IPR036376">
    <property type="entry name" value="RuBisCO_lsu_C_sf"/>
</dbReference>
<dbReference type="InterPro" id="IPR017443">
    <property type="entry name" value="RuBisCO_lsu_fd_N"/>
</dbReference>
<dbReference type="InterPro" id="IPR036422">
    <property type="entry name" value="RuBisCO_lsu_N_sf"/>
</dbReference>
<dbReference type="InterPro" id="IPR020888">
    <property type="entry name" value="RuBisCO_lsuI"/>
</dbReference>
<dbReference type="NCBIfam" id="NF003252">
    <property type="entry name" value="PRK04208.1"/>
    <property type="match status" value="1"/>
</dbReference>
<dbReference type="PANTHER" id="PTHR42704">
    <property type="entry name" value="RIBULOSE BISPHOSPHATE CARBOXYLASE"/>
    <property type="match status" value="1"/>
</dbReference>
<dbReference type="PANTHER" id="PTHR42704:SF16">
    <property type="entry name" value="RIBULOSE BISPHOSPHATE CARBOXYLASE LARGE CHAIN"/>
    <property type="match status" value="1"/>
</dbReference>
<dbReference type="Pfam" id="PF00016">
    <property type="entry name" value="RuBisCO_large"/>
    <property type="match status" value="1"/>
</dbReference>
<dbReference type="Pfam" id="PF02788">
    <property type="entry name" value="RuBisCO_large_N"/>
    <property type="match status" value="1"/>
</dbReference>
<dbReference type="SFLD" id="SFLDG01052">
    <property type="entry name" value="RuBisCO"/>
    <property type="match status" value="1"/>
</dbReference>
<dbReference type="SFLD" id="SFLDS00014">
    <property type="entry name" value="RuBisCO"/>
    <property type="match status" value="1"/>
</dbReference>
<dbReference type="SFLD" id="SFLDG00301">
    <property type="entry name" value="RuBisCO-like_proteins"/>
    <property type="match status" value="1"/>
</dbReference>
<dbReference type="SUPFAM" id="SSF51649">
    <property type="entry name" value="RuBisCo, C-terminal domain"/>
    <property type="match status" value="1"/>
</dbReference>
<dbReference type="SUPFAM" id="SSF54966">
    <property type="entry name" value="RuBisCO, large subunit, small (N-terminal) domain"/>
    <property type="match status" value="1"/>
</dbReference>
<dbReference type="PROSITE" id="PS00157">
    <property type="entry name" value="RUBISCO_LARGE"/>
    <property type="match status" value="1"/>
</dbReference>
<evidence type="ECO:0000255" key="1">
    <source>
        <dbReference type="HAMAP-Rule" id="MF_01338"/>
    </source>
</evidence>